<proteinExistence type="inferred from homology"/>
<name>ENO_MARN8</name>
<reference key="1">
    <citation type="journal article" date="2011" name="Appl. Environ. Microbiol.">
        <title>Genomic potential of Marinobacter aquaeolei, a biogeochemical 'opportunitroph'.</title>
        <authorList>
            <person name="Singer E."/>
            <person name="Webb E.A."/>
            <person name="Nelson W.C."/>
            <person name="Heidelberg J.F."/>
            <person name="Ivanova N."/>
            <person name="Pati A."/>
            <person name="Edwards K.J."/>
        </authorList>
    </citation>
    <scope>NUCLEOTIDE SEQUENCE [LARGE SCALE GENOMIC DNA]</scope>
    <source>
        <strain>ATCC 700491 / DSM 11845 / VT8</strain>
    </source>
</reference>
<dbReference type="EC" id="4.2.1.11" evidence="1"/>
<dbReference type="EMBL" id="CP000514">
    <property type="protein sequence ID" value="ABM18017.1"/>
    <property type="molecule type" value="Genomic_DNA"/>
</dbReference>
<dbReference type="RefSeq" id="WP_011784437.1">
    <property type="nucleotide sequence ID" value="NC_008740.1"/>
</dbReference>
<dbReference type="SMR" id="A1TZ48"/>
<dbReference type="STRING" id="351348.Maqu_0921"/>
<dbReference type="KEGG" id="maq:Maqu_0921"/>
<dbReference type="eggNOG" id="COG0148">
    <property type="taxonomic scope" value="Bacteria"/>
</dbReference>
<dbReference type="HOGENOM" id="CLU_031223_2_1_6"/>
<dbReference type="OrthoDB" id="9804716at2"/>
<dbReference type="UniPathway" id="UPA00109">
    <property type="reaction ID" value="UER00187"/>
</dbReference>
<dbReference type="Proteomes" id="UP000000998">
    <property type="component" value="Chromosome"/>
</dbReference>
<dbReference type="GO" id="GO:0009986">
    <property type="term" value="C:cell surface"/>
    <property type="evidence" value="ECO:0007669"/>
    <property type="project" value="UniProtKB-SubCell"/>
</dbReference>
<dbReference type="GO" id="GO:0005576">
    <property type="term" value="C:extracellular region"/>
    <property type="evidence" value="ECO:0007669"/>
    <property type="project" value="UniProtKB-SubCell"/>
</dbReference>
<dbReference type="GO" id="GO:0000015">
    <property type="term" value="C:phosphopyruvate hydratase complex"/>
    <property type="evidence" value="ECO:0007669"/>
    <property type="project" value="InterPro"/>
</dbReference>
<dbReference type="GO" id="GO:0000287">
    <property type="term" value="F:magnesium ion binding"/>
    <property type="evidence" value="ECO:0007669"/>
    <property type="project" value="UniProtKB-UniRule"/>
</dbReference>
<dbReference type="GO" id="GO:0004634">
    <property type="term" value="F:phosphopyruvate hydratase activity"/>
    <property type="evidence" value="ECO:0007669"/>
    <property type="project" value="UniProtKB-UniRule"/>
</dbReference>
<dbReference type="GO" id="GO:0006096">
    <property type="term" value="P:glycolytic process"/>
    <property type="evidence" value="ECO:0007669"/>
    <property type="project" value="UniProtKB-UniRule"/>
</dbReference>
<dbReference type="CDD" id="cd03313">
    <property type="entry name" value="enolase"/>
    <property type="match status" value="1"/>
</dbReference>
<dbReference type="FunFam" id="3.20.20.120:FF:000001">
    <property type="entry name" value="Enolase"/>
    <property type="match status" value="1"/>
</dbReference>
<dbReference type="FunFam" id="3.30.390.10:FF:000001">
    <property type="entry name" value="Enolase"/>
    <property type="match status" value="1"/>
</dbReference>
<dbReference type="Gene3D" id="3.20.20.120">
    <property type="entry name" value="Enolase-like C-terminal domain"/>
    <property type="match status" value="1"/>
</dbReference>
<dbReference type="Gene3D" id="3.30.390.10">
    <property type="entry name" value="Enolase-like, N-terminal domain"/>
    <property type="match status" value="1"/>
</dbReference>
<dbReference type="HAMAP" id="MF_00318">
    <property type="entry name" value="Enolase"/>
    <property type="match status" value="1"/>
</dbReference>
<dbReference type="InterPro" id="IPR000941">
    <property type="entry name" value="Enolase"/>
</dbReference>
<dbReference type="InterPro" id="IPR036849">
    <property type="entry name" value="Enolase-like_C_sf"/>
</dbReference>
<dbReference type="InterPro" id="IPR029017">
    <property type="entry name" value="Enolase-like_N"/>
</dbReference>
<dbReference type="InterPro" id="IPR020810">
    <property type="entry name" value="Enolase_C"/>
</dbReference>
<dbReference type="InterPro" id="IPR020809">
    <property type="entry name" value="Enolase_CS"/>
</dbReference>
<dbReference type="InterPro" id="IPR020811">
    <property type="entry name" value="Enolase_N"/>
</dbReference>
<dbReference type="NCBIfam" id="TIGR01060">
    <property type="entry name" value="eno"/>
    <property type="match status" value="1"/>
</dbReference>
<dbReference type="PANTHER" id="PTHR11902">
    <property type="entry name" value="ENOLASE"/>
    <property type="match status" value="1"/>
</dbReference>
<dbReference type="PANTHER" id="PTHR11902:SF1">
    <property type="entry name" value="ENOLASE"/>
    <property type="match status" value="1"/>
</dbReference>
<dbReference type="Pfam" id="PF00113">
    <property type="entry name" value="Enolase_C"/>
    <property type="match status" value="1"/>
</dbReference>
<dbReference type="Pfam" id="PF03952">
    <property type="entry name" value="Enolase_N"/>
    <property type="match status" value="1"/>
</dbReference>
<dbReference type="PIRSF" id="PIRSF001400">
    <property type="entry name" value="Enolase"/>
    <property type="match status" value="1"/>
</dbReference>
<dbReference type="PRINTS" id="PR00148">
    <property type="entry name" value="ENOLASE"/>
</dbReference>
<dbReference type="SFLD" id="SFLDF00002">
    <property type="entry name" value="enolase"/>
    <property type="match status" value="1"/>
</dbReference>
<dbReference type="SFLD" id="SFLDG00178">
    <property type="entry name" value="enolase"/>
    <property type="match status" value="1"/>
</dbReference>
<dbReference type="SMART" id="SM01192">
    <property type="entry name" value="Enolase_C"/>
    <property type="match status" value="1"/>
</dbReference>
<dbReference type="SMART" id="SM01193">
    <property type="entry name" value="Enolase_N"/>
    <property type="match status" value="1"/>
</dbReference>
<dbReference type="SUPFAM" id="SSF51604">
    <property type="entry name" value="Enolase C-terminal domain-like"/>
    <property type="match status" value="1"/>
</dbReference>
<dbReference type="SUPFAM" id="SSF54826">
    <property type="entry name" value="Enolase N-terminal domain-like"/>
    <property type="match status" value="1"/>
</dbReference>
<dbReference type="PROSITE" id="PS00164">
    <property type="entry name" value="ENOLASE"/>
    <property type="match status" value="1"/>
</dbReference>
<accession>A1TZ48</accession>
<sequence length="431" mass="45653">MTKIANIKAREVLDSRGNPTVEADVILEDGTLGRACAPSGASTGSREALELRDGDASRYLGKGVRKAVEAINGQIRDALLGKDAADQRSLDQIMIDLDGTENKANLGANAILAVSLAAAKAAAVSLGKPLYEHIADVNGTSGKFSMPVPMMNILNGGEHADNNVDIQEFMVQPVSVNSFGEALRVGAEIFHSLKKVLKAQGLNTAVGDEGGFAPNLPSNEAALAAIKEAVEKAGYELGKDVTLALDCASSEFYKDGQYQLSGEGKSFDSEGFADYLSGLCDRYPIVSIEDGMDESDWDGWKVLTDKLGSKVQLVGDDLFVTNTKILKQGIEKGIGNSILIKFNQIGSLTETLDAIKMAQDAGYTAVISHRSGETEDTTIADLAVATCAGQIKTGSLCRSDRVAKYNQLLRIEEALEGKAPYRGLSEIKGQG</sequence>
<organism>
    <name type="scientific">Marinobacter nauticus (strain ATCC 700491 / DSM 11845 / VT8)</name>
    <name type="common">Marinobacter aquaeolei</name>
    <dbReference type="NCBI Taxonomy" id="351348"/>
    <lineage>
        <taxon>Bacteria</taxon>
        <taxon>Pseudomonadati</taxon>
        <taxon>Pseudomonadota</taxon>
        <taxon>Gammaproteobacteria</taxon>
        <taxon>Pseudomonadales</taxon>
        <taxon>Marinobacteraceae</taxon>
        <taxon>Marinobacter</taxon>
    </lineage>
</organism>
<protein>
    <recommendedName>
        <fullName evidence="1">Enolase</fullName>
        <ecNumber evidence="1">4.2.1.11</ecNumber>
    </recommendedName>
    <alternativeName>
        <fullName evidence="1">2-phospho-D-glycerate hydro-lyase</fullName>
    </alternativeName>
    <alternativeName>
        <fullName evidence="1">2-phosphoglycerate dehydratase</fullName>
    </alternativeName>
</protein>
<comment type="function">
    <text evidence="1">Catalyzes the reversible conversion of 2-phosphoglycerate (2-PG) into phosphoenolpyruvate (PEP). It is essential for the degradation of carbohydrates via glycolysis.</text>
</comment>
<comment type="catalytic activity">
    <reaction evidence="1">
        <text>(2R)-2-phosphoglycerate = phosphoenolpyruvate + H2O</text>
        <dbReference type="Rhea" id="RHEA:10164"/>
        <dbReference type="ChEBI" id="CHEBI:15377"/>
        <dbReference type="ChEBI" id="CHEBI:58289"/>
        <dbReference type="ChEBI" id="CHEBI:58702"/>
        <dbReference type="EC" id="4.2.1.11"/>
    </reaction>
</comment>
<comment type="cofactor">
    <cofactor evidence="1">
        <name>Mg(2+)</name>
        <dbReference type="ChEBI" id="CHEBI:18420"/>
    </cofactor>
    <text evidence="1">Binds a second Mg(2+) ion via substrate during catalysis.</text>
</comment>
<comment type="pathway">
    <text evidence="1">Carbohydrate degradation; glycolysis; pyruvate from D-glyceraldehyde 3-phosphate: step 4/5.</text>
</comment>
<comment type="subunit">
    <text evidence="1">Component of the RNA degradosome, a multiprotein complex involved in RNA processing and mRNA degradation.</text>
</comment>
<comment type="subcellular location">
    <subcellularLocation>
        <location evidence="1">Cytoplasm</location>
    </subcellularLocation>
    <subcellularLocation>
        <location evidence="1">Secreted</location>
    </subcellularLocation>
    <subcellularLocation>
        <location evidence="1">Cell surface</location>
    </subcellularLocation>
    <text evidence="1">Fractions of enolase are present in both the cytoplasm and on the cell surface.</text>
</comment>
<comment type="similarity">
    <text evidence="1">Belongs to the enolase family.</text>
</comment>
<feature type="chain" id="PRO_0000280863" description="Enolase">
    <location>
        <begin position="1"/>
        <end position="431"/>
    </location>
</feature>
<feature type="active site" description="Proton donor" evidence="1">
    <location>
        <position position="209"/>
    </location>
</feature>
<feature type="active site" description="Proton acceptor" evidence="1">
    <location>
        <position position="341"/>
    </location>
</feature>
<feature type="binding site" evidence="1">
    <location>
        <position position="167"/>
    </location>
    <ligand>
        <name>(2R)-2-phosphoglycerate</name>
        <dbReference type="ChEBI" id="CHEBI:58289"/>
    </ligand>
</feature>
<feature type="binding site" evidence="1">
    <location>
        <position position="246"/>
    </location>
    <ligand>
        <name>Mg(2+)</name>
        <dbReference type="ChEBI" id="CHEBI:18420"/>
    </ligand>
</feature>
<feature type="binding site" evidence="1">
    <location>
        <position position="289"/>
    </location>
    <ligand>
        <name>Mg(2+)</name>
        <dbReference type="ChEBI" id="CHEBI:18420"/>
    </ligand>
</feature>
<feature type="binding site" evidence="1">
    <location>
        <position position="316"/>
    </location>
    <ligand>
        <name>Mg(2+)</name>
        <dbReference type="ChEBI" id="CHEBI:18420"/>
    </ligand>
</feature>
<feature type="binding site" evidence="1">
    <location>
        <position position="341"/>
    </location>
    <ligand>
        <name>(2R)-2-phosphoglycerate</name>
        <dbReference type="ChEBI" id="CHEBI:58289"/>
    </ligand>
</feature>
<feature type="binding site" evidence="1">
    <location>
        <position position="370"/>
    </location>
    <ligand>
        <name>(2R)-2-phosphoglycerate</name>
        <dbReference type="ChEBI" id="CHEBI:58289"/>
    </ligand>
</feature>
<feature type="binding site" evidence="1">
    <location>
        <position position="371"/>
    </location>
    <ligand>
        <name>(2R)-2-phosphoglycerate</name>
        <dbReference type="ChEBI" id="CHEBI:58289"/>
    </ligand>
</feature>
<feature type="binding site" evidence="1">
    <location>
        <position position="392"/>
    </location>
    <ligand>
        <name>(2R)-2-phosphoglycerate</name>
        <dbReference type="ChEBI" id="CHEBI:58289"/>
    </ligand>
</feature>
<keyword id="KW-0963">Cytoplasm</keyword>
<keyword id="KW-0324">Glycolysis</keyword>
<keyword id="KW-0456">Lyase</keyword>
<keyword id="KW-0460">Magnesium</keyword>
<keyword id="KW-0479">Metal-binding</keyword>
<keyword id="KW-0964">Secreted</keyword>
<evidence type="ECO:0000255" key="1">
    <source>
        <dbReference type="HAMAP-Rule" id="MF_00318"/>
    </source>
</evidence>
<gene>
    <name evidence="1" type="primary">eno</name>
    <name type="ordered locus">Maqu_0921</name>
</gene>